<protein>
    <recommendedName>
        <fullName>Uncharacterized protein VP1</fullName>
    </recommendedName>
</protein>
<accession>Q1I0V1</accession>
<sequence>MDNVISNIQTSLHEVHGRFETSGLNLTSLTSRVSALESGIDEDFSGQLSLKADKNEVAKFTSNSNVVTSYSVSQLGAKINNLEISDDNLQSSKVNKTRVSIALDDNGNDISDYTLSQEGLGNKLKVMDNEIGLRALTSRIASFTRDGVLTNLSSVELGARLIATESNADTRALKSEVSSHTDAENVTTTYGVTSLGAELHRIAVAVNSLDTYVLKTEVSRLESNGVVVPEYTLTQTELGAKLKNIVDSISNFVVNTQVSKNYDEGTLNYELNAYTLSDYELGAMLERFDTTHLLKSQVSKRYVLNADGSVSNDFNSDYTLSDFELGTKLFDIDTLLNTKISGEEVSINTSDPAYTLNQSELGTLLKTLTGRIDLVSPADADSSIFALKTSVSTHASNTAYTLSTTALATKLESMDSLLSSHGTLIDSKASISNMNERALQSRVSLKFINNDGVTIDEKFTCSVLELGSLLFNMDAATEAIARNYVTDEELAAAVATAVATTGALTSTSLLTTTVSTITKGGSSVVRTAADLARAVFGGGDSDDDDDPPPPVFIYRSEGIFRPANWGSDGNVDGYSRPMIEGRENIYASDGTAQDLHSYIINLVAGNAKVFYRDVSYTSKIRLLGSSGSADDKAAQYGPPASTSYFFPAPASLATVEAGLSWGSSTTRTQSDGTTLSGYTGGIHVLSCFGTSRFEGRSESRKVVWLTGAGTAASSTLDAKLAFDGTGGDAPIHVFGESTTKYGLDLHDAGLVMRNSQSNAKIDIKYHSSNLVFASLTPNVIPASPDILESILTIDSSANSVGIAGGASSQYKLYVHGGANFTSGITSSSASITGNNNSIPSLSISNTTVGAKKEFKMSTDQDGLIIEYGTATSGVVVMDTRISMNDTFTTVDSVGTNSGLEVVGKLGNKASMVLRHMPNSDNTKGTITLGRYLSIKTDLDASRLYTGYTSLDATELIYMDNSNVIVKGDLSVSGNISLIDTSVTPNTTTNIVSGISTALGRVSTLINGGDLSMLRPDGTSIVVRAANIESIGHPAYTVTDEQGVVTSVERTGLFLRPDSFAVDDQIDARLTSVGLTEGDGNENNPLTLNVYTIPQIDGIIAEGHVAGSVSRIIFSSSETLGSRTFPSVAITPINNPFITNATITNTIVGIKRVTVSGNSNEQGSGYVAGDTITISDSFGTGTNAVFTVVNASSGGVDGGSTSLTITNPGAYTSISGTPIVIVEENPTYPAVTGITQQSSSGSGTGVTFSVELSVISVDIFNAGKGYVTSPSVVVSGTYVDTVSNTTTTSGIQSAVAVLHTTSNVTVLDSRFSKAATLSISNTATQLTSALNGYVSTSDLGDELANYYNIDEIVEGFAPIAAPGETYAYLSTTSLENYQTRAASNILYQAKETADNAYIRASDLTASGTGFYDKTTSDERYQAQPASGESFALASSLVNLVDTSTTALTNYSTTNEASTLYQAKEDLNDPYVLRSTVSLDNYDTTTTINEKIAGVSSHFTKSGNNITYNYAGNVGIGGTPNTKLEVYGSIQALPITDTSCVFGNARVGGGAYAGYAHFTHAAINPTHFGNYALLQYSSGHTFLNCSAGSGVGLSFRKNNADWMEYQGNGLLYVTSGNTRYISYIGFQYNPSGLAAGIMAGTGNIVVSMKVLYAIECQRILVVSDERVKTNIRDVNDHEALDIIRLIKPKKFEYIDKESAGPGTIYGFIAQDIIQHVPECVKKGPGVIANIMDTARVCNGRTLIFERFDTSNLKGVNGTIQVLDVDGKNHDVIVETILDSRTVIINKDLSAYTGSVDENGVPQKVKHTTTLTQSEYDAYEDKSDIVKDGDTYTRTEYSNVGDNVFVRGEHVDDFHTMDKDHIIAITTAALQEIDRQLQLEKAKVISLESRLSALELKFGV</sequence>
<reference key="1">
    <citation type="journal article" date="2006" name="J. Gen. Virol.">
        <title>Micromonas pusilla reovirus: a new member of the family Reoviridae assigned to a novel proposed genus (Mimoreovirus).</title>
        <authorList>
            <person name="Attoui H."/>
            <person name="Jaafar F.M."/>
            <person name="Belhouchet M."/>
            <person name="de Micco P."/>
            <person name="de Lamballerie X."/>
            <person name="Brussaard C.P."/>
        </authorList>
    </citation>
    <scope>NUCLEOTIDE SEQUENCE [GENOMIC RNA]</scope>
</reference>
<dbReference type="EMBL" id="DQ126101">
    <property type="protein sequence ID" value="AAZ94041.1"/>
    <property type="molecule type" value="Genomic_RNA"/>
</dbReference>
<dbReference type="RefSeq" id="YP_654544.1">
    <property type="nucleotide sequence ID" value="NC_008171.1"/>
</dbReference>
<dbReference type="SMR" id="Q1I0V1"/>
<dbReference type="KEGG" id="vg:5076663"/>
<dbReference type="Proteomes" id="UP000000349">
    <property type="component" value="Genome"/>
</dbReference>
<dbReference type="InterPro" id="IPR030392">
    <property type="entry name" value="S74_ICA"/>
</dbReference>
<dbReference type="Pfam" id="PF13884">
    <property type="entry name" value="Peptidase_S74"/>
    <property type="match status" value="1"/>
</dbReference>
<dbReference type="PROSITE" id="PS51688">
    <property type="entry name" value="ICA"/>
    <property type="match status" value="1"/>
</dbReference>
<gene>
    <name type="primary">S1</name>
</gene>
<name>VP1_MPRVN</name>
<proteinExistence type="predicted"/>
<evidence type="ECO:0000255" key="1"/>
<evidence type="ECO:0000255" key="2">
    <source>
        <dbReference type="PROSITE-ProRule" id="PRU01025"/>
    </source>
</evidence>
<organismHost>
    <name type="scientific">Micromonas pusilla</name>
    <name type="common">Picoplanktonic green alga</name>
    <name type="synonym">Chromulina pusilla</name>
    <dbReference type="NCBI Taxonomy" id="38833"/>
</organismHost>
<keyword id="KW-0175">Coiled coil</keyword>
<keyword id="KW-1185">Reference proteome</keyword>
<organism>
    <name type="scientific">Micromonas pusilla reovirus (isolate Netherlands/2005)</name>
    <name type="common">MpRV</name>
    <dbReference type="NCBI Taxonomy" id="649596"/>
    <lineage>
        <taxon>Viruses</taxon>
        <taxon>Riboviria</taxon>
        <taxon>Orthornavirae</taxon>
        <taxon>Duplornaviricota</taxon>
        <taxon>Resentoviricetes</taxon>
        <taxon>Reovirales</taxon>
        <taxon>Sedoreoviridae</taxon>
        <taxon>Mimoreovirus</taxon>
        <taxon>Micromonas pusilla reovirus</taxon>
    </lineage>
</organism>
<feature type="chain" id="PRO_0000404163" description="Uncharacterized protein VP1">
    <location>
        <begin position="1"/>
        <end position="1897"/>
    </location>
</feature>
<feature type="domain" description="Peptidase S74" evidence="2">
    <location>
        <begin position="1661"/>
        <end position="1888"/>
    </location>
</feature>
<feature type="coiled-coil region" evidence="1">
    <location>
        <begin position="1865"/>
        <end position="1894"/>
    </location>
</feature>